<keyword id="KW-0025">Alternative splicing</keyword>
<keyword id="KW-0963">Cytoplasm</keyword>
<keyword id="KW-0539">Nucleus</keyword>
<keyword id="KW-1185">Reference proteome</keyword>
<protein>
    <recommendedName>
        <fullName evidence="7">Ran-binding protein M homolog</fullName>
        <shortName evidence="6">AtRanBPM</shortName>
    </recommendedName>
</protein>
<name>RANBM_ARATH</name>
<accession>F4HYD7</accession>
<accession>Q8VYQ8</accession>
<accession>Q9C8P9</accession>
<evidence type="ECO:0000255" key="1">
    <source>
        <dbReference type="PROSITE-ProRule" id="PRU00058"/>
    </source>
</evidence>
<evidence type="ECO:0000255" key="2">
    <source>
        <dbReference type="PROSITE-ProRule" id="PRU00126"/>
    </source>
</evidence>
<evidence type="ECO:0000255" key="3">
    <source>
        <dbReference type="PROSITE-ProRule" id="PRU00548"/>
    </source>
</evidence>
<evidence type="ECO:0000256" key="4">
    <source>
        <dbReference type="SAM" id="MobiDB-lite"/>
    </source>
</evidence>
<evidence type="ECO:0000269" key="5">
    <source>
    </source>
</evidence>
<evidence type="ECO:0000303" key="6">
    <source>
    </source>
</evidence>
<evidence type="ECO:0000305" key="7"/>
<evidence type="ECO:0000312" key="8">
    <source>
        <dbReference type="Araport" id="AT1G35470"/>
    </source>
</evidence>
<evidence type="ECO:0000312" key="9">
    <source>
        <dbReference type="EMBL" id="AAG52111.1"/>
    </source>
</evidence>
<organism>
    <name type="scientific">Arabidopsis thaliana</name>
    <name type="common">Mouse-ear cress</name>
    <dbReference type="NCBI Taxonomy" id="3702"/>
    <lineage>
        <taxon>Eukaryota</taxon>
        <taxon>Viridiplantae</taxon>
        <taxon>Streptophyta</taxon>
        <taxon>Embryophyta</taxon>
        <taxon>Tracheophyta</taxon>
        <taxon>Spermatophyta</taxon>
        <taxon>Magnoliopsida</taxon>
        <taxon>eudicotyledons</taxon>
        <taxon>Gunneridae</taxon>
        <taxon>Pentapetalae</taxon>
        <taxon>rosids</taxon>
        <taxon>malvids</taxon>
        <taxon>Brassicales</taxon>
        <taxon>Brassicaceae</taxon>
        <taxon>Camelineae</taxon>
        <taxon>Arabidopsis</taxon>
    </lineage>
</organism>
<reference key="1">
    <citation type="journal article" date="2000" name="Nature">
        <title>Sequence and analysis of chromosome 1 of the plant Arabidopsis thaliana.</title>
        <authorList>
            <person name="Theologis A."/>
            <person name="Ecker J.R."/>
            <person name="Palm C.J."/>
            <person name="Federspiel N.A."/>
            <person name="Kaul S."/>
            <person name="White O."/>
            <person name="Alonso J."/>
            <person name="Altafi H."/>
            <person name="Araujo R."/>
            <person name="Bowman C.L."/>
            <person name="Brooks S.Y."/>
            <person name="Buehler E."/>
            <person name="Chan A."/>
            <person name="Chao Q."/>
            <person name="Chen H."/>
            <person name="Cheuk R.F."/>
            <person name="Chin C.W."/>
            <person name="Chung M.K."/>
            <person name="Conn L."/>
            <person name="Conway A.B."/>
            <person name="Conway A.R."/>
            <person name="Creasy T.H."/>
            <person name="Dewar K."/>
            <person name="Dunn P."/>
            <person name="Etgu P."/>
            <person name="Feldblyum T.V."/>
            <person name="Feng J.-D."/>
            <person name="Fong B."/>
            <person name="Fujii C.Y."/>
            <person name="Gill J.E."/>
            <person name="Goldsmith A.D."/>
            <person name="Haas B."/>
            <person name="Hansen N.F."/>
            <person name="Hughes B."/>
            <person name="Huizar L."/>
            <person name="Hunter J.L."/>
            <person name="Jenkins J."/>
            <person name="Johnson-Hopson C."/>
            <person name="Khan S."/>
            <person name="Khaykin E."/>
            <person name="Kim C.J."/>
            <person name="Koo H.L."/>
            <person name="Kremenetskaia I."/>
            <person name="Kurtz D.B."/>
            <person name="Kwan A."/>
            <person name="Lam B."/>
            <person name="Langin-Hooper S."/>
            <person name="Lee A."/>
            <person name="Lee J.M."/>
            <person name="Lenz C.A."/>
            <person name="Li J.H."/>
            <person name="Li Y.-P."/>
            <person name="Lin X."/>
            <person name="Liu S.X."/>
            <person name="Liu Z.A."/>
            <person name="Luros J.S."/>
            <person name="Maiti R."/>
            <person name="Marziali A."/>
            <person name="Militscher J."/>
            <person name="Miranda M."/>
            <person name="Nguyen M."/>
            <person name="Nierman W.C."/>
            <person name="Osborne B.I."/>
            <person name="Pai G."/>
            <person name="Peterson J."/>
            <person name="Pham P.K."/>
            <person name="Rizzo M."/>
            <person name="Rooney T."/>
            <person name="Rowley D."/>
            <person name="Sakano H."/>
            <person name="Salzberg S.L."/>
            <person name="Schwartz J.R."/>
            <person name="Shinn P."/>
            <person name="Southwick A.M."/>
            <person name="Sun H."/>
            <person name="Tallon L.J."/>
            <person name="Tambunga G."/>
            <person name="Toriumi M.J."/>
            <person name="Town C.D."/>
            <person name="Utterback T."/>
            <person name="Van Aken S."/>
            <person name="Vaysberg M."/>
            <person name="Vysotskaia V.S."/>
            <person name="Walker M."/>
            <person name="Wu D."/>
            <person name="Yu G."/>
            <person name="Fraser C.M."/>
            <person name="Venter J.C."/>
            <person name="Davis R.W."/>
        </authorList>
    </citation>
    <scope>NUCLEOTIDE SEQUENCE [LARGE SCALE GENOMIC DNA]</scope>
    <source>
        <strain>cv. Columbia</strain>
    </source>
</reference>
<reference key="2">
    <citation type="journal article" date="2017" name="Plant J.">
        <title>Araport11: a complete reannotation of the Arabidopsis thaliana reference genome.</title>
        <authorList>
            <person name="Cheng C.Y."/>
            <person name="Krishnakumar V."/>
            <person name="Chan A.P."/>
            <person name="Thibaud-Nissen F."/>
            <person name="Schobel S."/>
            <person name="Town C.D."/>
        </authorList>
    </citation>
    <scope>GENOME REANNOTATION</scope>
    <source>
        <strain>cv. Columbia</strain>
    </source>
</reference>
<reference key="3">
    <citation type="journal article" date="2003" name="Science">
        <title>Empirical analysis of transcriptional activity in the Arabidopsis genome.</title>
        <authorList>
            <person name="Yamada K."/>
            <person name="Lim J."/>
            <person name="Dale J.M."/>
            <person name="Chen H."/>
            <person name="Shinn P."/>
            <person name="Palm C.J."/>
            <person name="Southwick A.M."/>
            <person name="Wu H.C."/>
            <person name="Kim C.J."/>
            <person name="Nguyen M."/>
            <person name="Pham P.K."/>
            <person name="Cheuk R.F."/>
            <person name="Karlin-Newmann G."/>
            <person name="Liu S.X."/>
            <person name="Lam B."/>
            <person name="Sakano H."/>
            <person name="Wu T."/>
            <person name="Yu G."/>
            <person name="Miranda M."/>
            <person name="Quach H.L."/>
            <person name="Tripp M."/>
            <person name="Chang C.H."/>
            <person name="Lee J.M."/>
            <person name="Toriumi M.J."/>
            <person name="Chan M.M."/>
            <person name="Tang C.C."/>
            <person name="Onodera C.S."/>
            <person name="Deng J.M."/>
            <person name="Akiyama K."/>
            <person name="Ansari Y."/>
            <person name="Arakawa T."/>
            <person name="Banh J."/>
            <person name="Banno F."/>
            <person name="Bowser L."/>
            <person name="Brooks S.Y."/>
            <person name="Carninci P."/>
            <person name="Chao Q."/>
            <person name="Choy N."/>
            <person name="Enju A."/>
            <person name="Goldsmith A.D."/>
            <person name="Gurjal M."/>
            <person name="Hansen N.F."/>
            <person name="Hayashizaki Y."/>
            <person name="Johnson-Hopson C."/>
            <person name="Hsuan V.W."/>
            <person name="Iida K."/>
            <person name="Karnes M."/>
            <person name="Khan S."/>
            <person name="Koesema E."/>
            <person name="Ishida J."/>
            <person name="Jiang P.X."/>
            <person name="Jones T."/>
            <person name="Kawai J."/>
            <person name="Kamiya A."/>
            <person name="Meyers C."/>
            <person name="Nakajima M."/>
            <person name="Narusaka M."/>
            <person name="Seki M."/>
            <person name="Sakurai T."/>
            <person name="Satou M."/>
            <person name="Tamse R."/>
            <person name="Vaysberg M."/>
            <person name="Wallender E.K."/>
            <person name="Wong C."/>
            <person name="Yamamura Y."/>
            <person name="Yuan S."/>
            <person name="Shinozaki K."/>
            <person name="Davis R.W."/>
            <person name="Theologis A."/>
            <person name="Ecker J.R."/>
        </authorList>
    </citation>
    <scope>NUCLEOTIDE SEQUENCE [LARGE SCALE MRNA] (ISOFORM 2)</scope>
    <source>
        <strain>cv. Columbia</strain>
    </source>
</reference>
<reference key="4">
    <citation type="journal article" date="2012" name="BMC Plant Biol.">
        <title>Interactions of an Arabidopsis RanBPM homologue with LisH-CTLH domain proteins revealed high conservation of CTLH complexes in eukaryotes.</title>
        <authorList>
            <person name="Tomastikova E."/>
            <person name="Cenklova V."/>
            <person name="Kohoutova L."/>
            <person name="Petrovska B."/>
            <person name="Vachova L."/>
            <person name="Halada P."/>
            <person name="Kocarova G."/>
            <person name="Binarova P."/>
        </authorList>
    </citation>
    <scope>IDENTIFICATION BY MASS SPECTROMETRY</scope>
    <scope>INTERACTION WITH WDR36; WDS; GID8; MAEA AND RMD5</scope>
    <scope>SUBCELLULAR LOCATION</scope>
</reference>
<sequence length="467" mass="52349">MNSSPPPANSANGDTTNNGENGQDLNLNFLDKIRLSAKRDAKEDEGEELPTELNTINSAGGFLVVSPDKLSVKYTNTNLHGHDVGVVQANKPAPIKCLTYYFEIFVKDSGIKGQIAIGFTKESFKMRRQPGWEVNSCGYHGDDGYLYRGQGKGEPFGPKFTKDDAVGGGINYASQEFFFTKNGTIVGKIPKDIRGHLFPTVAVHSQNEEVLVNFGKKKFAFDIKGYEASERNKQQLAIEKISIPPNIGYGLVKTYLLHYGYEETLDAFNLATKNTVPPIHIDQENAIDEDDSSYALKQRKNLRQLVRNGEIDTALAELQKLYPQIVQDDKSVVCFLLHCQKFIELVRVGKLEEGVNYGRLELAKFVGLTGFQDIVEDCFALLAYEKPEESSVWYFLEDSQRELVADAVNAAILSTNPNKKDVQRSCHLQSHLEKLLRQLTVCCLERRSLNGDQGETFRLRHVLNNNR</sequence>
<dbReference type="EMBL" id="AC023064">
    <property type="protein sequence ID" value="AAG52111.1"/>
    <property type="status" value="ALT_SEQ"/>
    <property type="molecule type" value="Genomic_DNA"/>
</dbReference>
<dbReference type="EMBL" id="CP002684">
    <property type="protein sequence ID" value="AEE31799.1"/>
    <property type="molecule type" value="Genomic_DNA"/>
</dbReference>
<dbReference type="EMBL" id="CP002684">
    <property type="protein sequence ID" value="AEE31798.1"/>
    <property type="molecule type" value="Genomic_DNA"/>
</dbReference>
<dbReference type="EMBL" id="AY070090">
    <property type="protein sequence ID" value="AAL49784.1"/>
    <property type="molecule type" value="mRNA"/>
</dbReference>
<dbReference type="EMBL" id="AY096710">
    <property type="protein sequence ID" value="AAM20344.1"/>
    <property type="molecule type" value="mRNA"/>
</dbReference>
<dbReference type="PIR" id="G86475">
    <property type="entry name" value="G86475"/>
</dbReference>
<dbReference type="RefSeq" id="NP_174777.2">
    <molecule id="F4HYD7-2"/>
    <property type="nucleotide sequence ID" value="NM_103241.3"/>
</dbReference>
<dbReference type="RefSeq" id="NP_973963.1">
    <molecule id="F4HYD7-1"/>
    <property type="nucleotide sequence ID" value="NM_202234.3"/>
</dbReference>
<dbReference type="SMR" id="F4HYD7"/>
<dbReference type="FunCoup" id="F4HYD7">
    <property type="interactions" value="2751"/>
</dbReference>
<dbReference type="STRING" id="3702.F4HYD7"/>
<dbReference type="PaxDb" id="3702-AT1G35470.2"/>
<dbReference type="ProteomicsDB" id="236861">
    <molecule id="F4HYD7-1"/>
</dbReference>
<dbReference type="DNASU" id="840440"/>
<dbReference type="EnsemblPlants" id="AT1G35470.1">
    <molecule id="F4HYD7-2"/>
    <property type="protein sequence ID" value="AT1G35470.1"/>
    <property type="gene ID" value="AT1G35470"/>
</dbReference>
<dbReference type="EnsemblPlants" id="AT1G35470.2">
    <molecule id="F4HYD7-1"/>
    <property type="protein sequence ID" value="AT1G35470.2"/>
    <property type="gene ID" value="AT1G35470"/>
</dbReference>
<dbReference type="GeneID" id="840440"/>
<dbReference type="Gramene" id="AT1G35470.1">
    <molecule id="F4HYD7-2"/>
    <property type="protein sequence ID" value="AT1G35470.1"/>
    <property type="gene ID" value="AT1G35470"/>
</dbReference>
<dbReference type="Gramene" id="AT1G35470.2">
    <molecule id="F4HYD7-1"/>
    <property type="protein sequence ID" value="AT1G35470.2"/>
    <property type="gene ID" value="AT1G35470"/>
</dbReference>
<dbReference type="KEGG" id="ath:AT1G35470"/>
<dbReference type="Araport" id="AT1G35470"/>
<dbReference type="TAIR" id="AT1G35470">
    <property type="gene designation" value="RANBPM"/>
</dbReference>
<dbReference type="eggNOG" id="KOG1477">
    <property type="taxonomic scope" value="Eukaryota"/>
</dbReference>
<dbReference type="InParanoid" id="F4HYD7"/>
<dbReference type="OMA" id="GCCINFV"/>
<dbReference type="OrthoDB" id="25503at2759"/>
<dbReference type="CD-CODE" id="33FCD62D">
    <property type="entry name" value="Centrosome"/>
</dbReference>
<dbReference type="PRO" id="PR:F4HYD7"/>
<dbReference type="Proteomes" id="UP000006548">
    <property type="component" value="Chromosome 1"/>
</dbReference>
<dbReference type="ExpressionAtlas" id="F4HYD7">
    <property type="expression patterns" value="baseline and differential"/>
</dbReference>
<dbReference type="GO" id="GO:0005737">
    <property type="term" value="C:cytoplasm"/>
    <property type="evidence" value="ECO:0000314"/>
    <property type="project" value="TAIR"/>
</dbReference>
<dbReference type="GO" id="GO:0005634">
    <property type="term" value="C:nucleus"/>
    <property type="evidence" value="ECO:0000314"/>
    <property type="project" value="TAIR"/>
</dbReference>
<dbReference type="GO" id="GO:0048471">
    <property type="term" value="C:perinuclear region of cytoplasm"/>
    <property type="evidence" value="ECO:0007669"/>
    <property type="project" value="UniProtKB-SubCell"/>
</dbReference>
<dbReference type="CDD" id="cd12885">
    <property type="entry name" value="SPRY_RanBP_like"/>
    <property type="match status" value="1"/>
</dbReference>
<dbReference type="FunFam" id="2.60.120.920:FF:000092">
    <property type="entry name" value="Ran-binding protein M homolog"/>
    <property type="match status" value="1"/>
</dbReference>
<dbReference type="Gene3D" id="2.60.120.920">
    <property type="match status" value="1"/>
</dbReference>
<dbReference type="InterPro" id="IPR001870">
    <property type="entry name" value="B30.2/SPRY"/>
</dbReference>
<dbReference type="InterPro" id="IPR043136">
    <property type="entry name" value="B30.2/SPRY_sf"/>
</dbReference>
<dbReference type="InterPro" id="IPR013320">
    <property type="entry name" value="ConA-like_dom_sf"/>
</dbReference>
<dbReference type="InterPro" id="IPR013144">
    <property type="entry name" value="CRA_dom"/>
</dbReference>
<dbReference type="InterPro" id="IPR024964">
    <property type="entry name" value="CTLH/CRA"/>
</dbReference>
<dbReference type="InterPro" id="IPR006595">
    <property type="entry name" value="CTLH_C"/>
</dbReference>
<dbReference type="InterPro" id="IPR006594">
    <property type="entry name" value="LisH"/>
</dbReference>
<dbReference type="InterPro" id="IPR003877">
    <property type="entry name" value="SPRY_dom"/>
</dbReference>
<dbReference type="InterPro" id="IPR050618">
    <property type="entry name" value="Ubq-SigPath_Reg"/>
</dbReference>
<dbReference type="InterPro" id="IPR044736">
    <property type="entry name" value="Vid30/RanBPM/SPLA_SPRY"/>
</dbReference>
<dbReference type="PANTHER" id="PTHR12864">
    <property type="entry name" value="RAN BINDING PROTEIN 9-RELATED"/>
    <property type="match status" value="1"/>
</dbReference>
<dbReference type="Pfam" id="PF10607">
    <property type="entry name" value="CTLH"/>
    <property type="match status" value="1"/>
</dbReference>
<dbReference type="Pfam" id="PF00622">
    <property type="entry name" value="SPRY"/>
    <property type="match status" value="1"/>
</dbReference>
<dbReference type="SMART" id="SM00757">
    <property type="entry name" value="CRA"/>
    <property type="match status" value="1"/>
</dbReference>
<dbReference type="SMART" id="SM00668">
    <property type="entry name" value="CTLH"/>
    <property type="match status" value="1"/>
</dbReference>
<dbReference type="SMART" id="SM00449">
    <property type="entry name" value="SPRY"/>
    <property type="match status" value="1"/>
</dbReference>
<dbReference type="SUPFAM" id="SSF49899">
    <property type="entry name" value="Concanavalin A-like lectins/glucanases"/>
    <property type="match status" value="1"/>
</dbReference>
<dbReference type="PROSITE" id="PS50188">
    <property type="entry name" value="B302_SPRY"/>
    <property type="match status" value="1"/>
</dbReference>
<dbReference type="PROSITE" id="PS50897">
    <property type="entry name" value="CTLH"/>
    <property type="match status" value="1"/>
</dbReference>
<dbReference type="PROSITE" id="PS50896">
    <property type="entry name" value="LISH"/>
    <property type="match status" value="1"/>
</dbReference>
<feature type="chain" id="PRO_0000442056" description="Ran-binding protein M homolog">
    <location>
        <begin position="1"/>
        <end position="467"/>
    </location>
</feature>
<feature type="domain" description="B30.2/SPRY" evidence="3">
    <location>
        <begin position="31"/>
        <end position="219"/>
    </location>
</feature>
<feature type="domain" description="LisH" evidence="2">
    <location>
        <begin position="244"/>
        <end position="276"/>
    </location>
</feature>
<feature type="domain" description="CTLH" evidence="1">
    <location>
        <begin position="295"/>
        <end position="353"/>
    </location>
</feature>
<feature type="region of interest" description="Disordered" evidence="4">
    <location>
        <begin position="1"/>
        <end position="25"/>
    </location>
</feature>
<feature type="compositionally biased region" description="Polar residues" evidence="4">
    <location>
        <begin position="9"/>
        <end position="25"/>
    </location>
</feature>
<feature type="splice variant" id="VSP_059163" description="In isoform 2.">
    <location>
        <begin position="347"/>
        <end position="348"/>
    </location>
</feature>
<proteinExistence type="evidence at protein level"/>
<gene>
    <name evidence="6" type="primary">RANBPM</name>
    <name evidence="8" type="ordered locus">At1g35470</name>
    <name evidence="9" type="ORF">F12A4.1</name>
</gene>
<comment type="subunit">
    <text evidence="5">Interacts with WDR36, WDS, GID8, MAEA and RMD5.</text>
</comment>
<comment type="subcellular location">
    <subcellularLocation>
        <location evidence="5">Cytoplasm</location>
    </subcellularLocation>
    <subcellularLocation>
        <location evidence="5">Nucleus</location>
    </subcellularLocation>
    <subcellularLocation>
        <location evidence="5">Cytoplasm</location>
        <location evidence="5">Perinuclear region</location>
    </subcellularLocation>
    <text evidence="5">Associates predominantly in the form of large cytoplasmic complexes.</text>
</comment>
<comment type="alternative products">
    <event type="alternative splicing"/>
    <isoform>
        <id>F4HYD7-1</id>
        <name>1</name>
        <sequence type="displayed"/>
    </isoform>
    <isoform>
        <id>F4HYD7-2</id>
        <name>2</name>
        <sequence type="described" ref="VSP_059163"/>
    </isoform>
</comment>
<comment type="similarity">
    <text evidence="7">Belongs to the RANBP9/10 family.</text>
</comment>
<comment type="sequence caution" evidence="7">
    <conflict type="erroneous gene model prediction">
        <sequence resource="EMBL-CDS" id="AAG52111"/>
    </conflict>
</comment>